<accession>Q86JF2</accession>
<accession>Q55AT1</accession>
<accession>Q8IHL0</accession>
<evidence type="ECO:0000255" key="1"/>
<evidence type="ECO:0000255" key="2">
    <source>
        <dbReference type="PROSITE-ProRule" id="PRU00026"/>
    </source>
</evidence>
<evidence type="ECO:0000255" key="3">
    <source>
        <dbReference type="PROSITE-ProRule" id="PRU01119"/>
    </source>
</evidence>
<evidence type="ECO:0000256" key="4">
    <source>
        <dbReference type="SAM" id="MobiDB-lite"/>
    </source>
</evidence>
<evidence type="ECO:0000269" key="5">
    <source>
    </source>
</evidence>
<evidence type="ECO:0000269" key="6">
    <source>
    </source>
</evidence>
<evidence type="ECO:0000269" key="7">
    <source>
    </source>
</evidence>
<evidence type="ECO:0000269" key="8">
    <source>
    </source>
</evidence>
<evidence type="ECO:0000305" key="9"/>
<gene>
    <name type="primary">lvsB</name>
    <name type="ORF">DDB_G0271504</name>
</gene>
<name>LVSB_DICDI</name>
<organism>
    <name type="scientific">Dictyostelium discoideum</name>
    <name type="common">Social amoeba</name>
    <dbReference type="NCBI Taxonomy" id="44689"/>
    <lineage>
        <taxon>Eukaryota</taxon>
        <taxon>Amoebozoa</taxon>
        <taxon>Evosea</taxon>
        <taxon>Eumycetozoa</taxon>
        <taxon>Dictyostelia</taxon>
        <taxon>Dictyosteliales</taxon>
        <taxon>Dictyosteliaceae</taxon>
        <taxon>Dictyostelium</taxon>
    </lineage>
</organism>
<protein>
    <recommendedName>
        <fullName>BEACH domain-containing protein lvsB</fullName>
    </recommendedName>
</protein>
<proteinExistence type="predicted"/>
<sequence>MNRNFNNINNNNNNNNNYHGYQYHQQQQQQNQQQQQQQYNNNVIKYLWNTYTQTVVYQDSLFNLVEFLQFFTLNYYNDTIGDLLFLSNGTLTDITRHLSKHLIEEIGYSCTLLNQQQQTQQTQTQTQSKQQTIPQLSLNNSIPTSFTTTASSTNTTPNAGLKLAEYEIYQYLIGYSTAGEGPLVLAALDILSRQSPNGIPLSFLNFLITILLRILSLPPELLYNNNNNDNNNNINNFSGNNNNNFNNNNHYFNNNHNNHNHHYQHHQLKEKKKNVNKQHFKPIESFFYLQPLPSSLSDMFRDDDYASLSSSYGGGGNLTPLSLSSNHAFSPPLSSLKNSSSNTFTKPSSSTTTTTTTTTQTPTPNSNTDSKQNKDNNNSKNNNKEVSSVVLLGYQILKIVENLVKDKLFLYELVTSDCFSQLLNIFYKLPILSTTASSLPPNSSFSIIYQQLSQIFAQIMSKSCLSSDTIVLIHNFKLIKNLLNIMDKLKEKDEYNMNLIIELNKIILFSIKSSTSITKLLHDDFTKANGYSILLNSMIFISDYGTLKNKIDYIQTTTNLLFIGHRSSYLDKANTKMFEIYLNVFSISTSEETKTELLKCIKGVFYTSLIEESSSSSSLIISSSDNNNNNNNNSDGVNDDKNNNNNNRDNIIFEDVIDMDGNDSYLIFHQFQPFTILFSQFDTLNINNRRMILDMMDVLLTKNRISLNELKEYCNLFKSELPSTVLLVSQHLTELLTKGKVSCDVLGRDLSLTQKLLEFLVNDPTTLRFSSILLQNETELQLCFSILSTNNNNNNSSSKYYSNNIQQQQQQQQQQQQQQKKRHVSRYLVLYMIVTEILSLLLELLVPPSIQTIFIQECQGLKLLYPMLLDEYLIQPALKVIASIAIGGLQLESRIIPDLIMELQNNGGGATNLDSKVLTMRKNIFSSMCYIFHNNPNSKNSFRNFQGFTWSLSILDGISRYLISIDNNNNNSSNNNSNDNLNDFKESLDHSCNGVLNSNNSSNNSNLNGGIGNEIKKSSFNEIFYFLKVLIDMLSAAMKNNSINQEYFRKEIIIISRSLKQCKYMEGIHAISLCDSLLNMAITGSWPPSCENHSLEEGSLFSLYSPITSFFPINTTLSKNFDISFILKFEKKEQMEQQLKQQILLNSNNNINNGNGGSISPSSIINNMNSPGGGSSSSNDSLKSPTRRSRSYTNDFHLDKSSRIPHPPDFNNNNDTMNYDYNFQDDYIESLNSKSSSSFSLDLASVTGDSEIVYYGGSTTSRMIHSPGLPSSSLQALSSNSTKLPEKSSLQLAQERYICCQSCRDTLTLEMPEIFKLIIELMSSDDDISQTEIKSSCYIIRELIFLTNCSLANQKRLSSLLIDIITHFKPLLLSIILYQKQQQQQQQQQQQSNSNSNSNSTIILKKKINNETSTKLKPLLLDLIQTLAGHNLTLIEFRKYFELLKVKDSNNQFIYPIDLLNLLLKISSNRDNIPLYYAELSKHGLEYIDFPSWGERTWPPTKGFGISFWFRYSLPCLNINKSPIYLLSIEGSIGNSSTKSCECQLILENGKLVYKIYHFSGICETYHFSDHKFEPDQFYHISISHSSLLSTTTTTATTANTTTNSTTASTTTTTTNSTTAVSSTTNSISTTAAVAAITTSDGNSGISRENSLGGRDSIGSNSSSSSSSSNSGVSSGSSTNLNKKSPVKLYVNGCLRGQILANYPKSNSMTLYIRFGGVNAASSVISNNQDVQSFNVNNSWNLGNAYFFEEVPLDKEIFYLYLLGPNHFRGLKVDLSAVDSIQPSLDKVSNLHPFLIDHLLNPTVQPLLSLHEKIMYIFTAKCLYVTTHRITNKTESVTHASALPQLSTILFQQQQLQQQQLQQQITNSTTSILNELNLSNSINLIRRGSENSLITSSSSSSLSLSLSSNTNNNNNNNTRSSLERSISGNFLQSPSSSNNNLRERSINNNNNNNNNSNNNNNNNSISSSTSSLSSSVISLVAGAMAVPSPPSPNKLGSGINGSSILNASLTTLSISTNNNSNNSNNSNSNNNNNNNNTNYNSNSLNNSLNHQALSLLHTGLPIALPRGVISQIGVKDAIMNSGGVSVIIYLIAMAEDKEYQRSGLKLLQSIIHNSQLNLKDMKEISGYQLVSFLIRKKNWVLDDQLLSILFSFVGIQSTRTSIHYVDGVVQDVLALKHFLLERSIWRRASLIDQKKLFESLEKLVNVLHENHEFNIIKFRQAGAYETILKMCREDDLPLELLSTLTKILRSITTNKSNKLKDDLQLILSWLLETMPKQQIFKKYNSFNGLNSTNNSNNNNNNPISLFRKGRKTLLQVQFDNHQLYLQQQQQQNLIPQVNSNNNNEESNNGIEGIIRINILNLLLDILSKTELSVVEDFHSICSLETIFGLLTCESMVSRVMFLKIIDIFLHSQMIFGHFQKMKGFHLLGHQLLPFETSEKIFGVLFCILFGKPSNSDILEGLSMRMYFLSHLSDAEMKYPGAIVTILIILCNSNSTTQHNVIKMIHNIFLQNDQFKQSLLDNELIPRLVDILSSNYQRRGSSSSSTNSTTNNNNNNSSTTTTSNNNNNNNENNNEDDWVAEESILSLLKEIALYGAKSQDGSAALLRDILVVLHLNTRMDYDYICCLQRRVLFDVISFFNDNIHSFSSIDSLVSSFEKLCVLTIHTLSYQEKLLLTNGTGTGGGTGGSGGGLLTKKSFRSNLFSPSRSKEKEKEKEKEKEKEKEKEKERERERETTNVTSDSDNILSANDIFYGDQSNEESSTTDSDSTSDNNNNNNRNSYSGRNIRGNGINNNNNKNKFIPIWIKEGNLLDQEEFIRSLLKVLSKSKIPQSNTTYRNLFSTQYSARSLLCKFIFILLTFDEFKDYYLMVLQELSNMVPSLSNTPISSSPIISPINNNNNYYNTNSNTNSNSSTPSLFSITSNNNNNNNNNNNNNNNNNNNNNTNSTNQTITDTTLSPASSNVSISNQSTPISNNNNNNNSSGGGSGGSNINIPPTINISDSNSNSNEQQGISSVLSEIIMEEDFILVLLHITHKFLQSGNDYEIQRNSFRLWVSIIQHCSQVDYVKKAFDTTTTSLAVLSSSQEIRDLLIRYQQIYVENEFKKWEEKFNQSKKEWKLQYFETQKNKQSMITKNQDITKSTKKLSDSLIQLKSEYEKSNYQYLIENRESKRFFQSQWKLLIKKVTHEKAIWSPNYEISNSSSTNITTTTTTTTTAKKWKLDPTEGLNRMRMRLKVISDNTSNSHIPLIPDLSTPSTPPSPQNTKDQLLFNFNNYNNNNNNNNNNGLNAPPLHGSLDYSSFDNLKLGEKVNEVFKCSCISPFYQRDGELLIGDQNVYFLDELLTSADRKKTTASTVGGSNNNNNNNNNNNNNNNNNNNNSNDTTSSINSTTATNTNTTNTTTTNTTTTTTTTNGLSNIVKPPQRGKHITWSYDDIIEIHKRRHVLKNNAIEIFLGSGVPHKTYLFAFNKPSDRDIVYDLIMSKPLPNRVDYAAEVHGNILKMSITKKWQSGLISNFEYLMHLNTLAGRSFNDLTQYPIFPFILRDYESEVLDLENPNTFRDFTKPMGAQDPKRLEKFIEKYNDLLEMNEKPYHYGSHYSNIGSVLHFLVRLQPFTSYFIDFQGGRFDVPDRAFHSIAQSWNLSSSISNSDVKELIPEFFYLSDFLVNSNKFFMGIKQNGVKVDDVILPPWAHNDPRLFIKKHNEALECKYVSENLHHWIDLLFGYKQQGEAAVKAHNMFFPLTYEGAVDIDSIEDQLNRDAAVAQIHSYGQTPKQIFTKPHPKKNWSKTIRLTQDSIFTKPERLTSYIMFQYRSPIGSITIANDSSPIHLTPQRILFFPDNNKSISWGHWDQNLRVNSIDTGKVLSIIEVLNDDIICGDITKNGRLFVTGGTAGTVKVWKRCNNDGTIMTRKERGDNLSLWSTLYGHTNSILCVTVSQEYSIIVSGSKDSNCIIWDLNRLTYINSLQHDHPVTCVQVSPTFGYIATFETNIYNKQNNNSGGGGSKNDNSINGSGCLRLWSINGTLLAKQNFVNDRVNCMIFTSTIQGVNTNLLITGMESGTIILWNAWNLQKIRTLVSKSTITALAVSKDNTQLISGDINGLIECLSSRSFDGYSSIVLG</sequence>
<comment type="function">
    <text evidence="5 6 7 8">Involved in negative regulation of lysosome biogenesis, by limiting the heterotypic fusion of early endosomes and postlysosomal compartments.</text>
</comment>
<comment type="subcellular location">
    <subcellularLocation>
        <location evidence="9">Membrane</location>
        <topology evidence="9">Multi-pass membrane protein</topology>
    </subcellularLocation>
    <subcellularLocation>
        <location evidence="7">Lysosome</location>
    </subcellularLocation>
    <subcellularLocation>
        <location evidence="7">Endosome</location>
    </subcellularLocation>
    <text>Also found in post-lysosome.</text>
</comment>
<comment type="sequence caution" evidence="9">
    <conflict type="erroneous gene model prediction">
        <sequence resource="EMBL-CDS" id="AAN38985"/>
    </conflict>
</comment>
<feature type="chain" id="PRO_0000327708" description="BEACH domain-containing protein lvsB">
    <location>
        <begin position="1"/>
        <end position="4118"/>
    </location>
</feature>
<feature type="transmembrane region" description="Helical" evidence="1">
    <location>
        <begin position="198"/>
        <end position="218"/>
    </location>
</feature>
<feature type="transmembrane region" description="Helical" evidence="1">
    <location>
        <begin position="827"/>
        <end position="847"/>
    </location>
</feature>
<feature type="domain" description="BEACH-type PH" evidence="3">
    <location>
        <begin position="3303"/>
        <end position="3479"/>
    </location>
</feature>
<feature type="domain" description="BEACH" evidence="2">
    <location>
        <begin position="3491"/>
        <end position="3782"/>
    </location>
</feature>
<feature type="repeat" description="WD 1">
    <location>
        <begin position="3868"/>
        <end position="3907"/>
    </location>
</feature>
<feature type="repeat" description="WD 2">
    <location>
        <begin position="3924"/>
        <end position="3963"/>
    </location>
</feature>
<feature type="repeat" description="WD 3">
    <location>
        <begin position="3984"/>
        <end position="4027"/>
    </location>
</feature>
<feature type="repeat" description="WD 4">
    <location>
        <begin position="4029"/>
        <end position="4073"/>
    </location>
</feature>
<feature type="repeat" description="WD 5">
    <location>
        <begin position="4075"/>
        <end position="4114"/>
    </location>
</feature>
<feature type="region of interest" description="Disordered" evidence="4">
    <location>
        <begin position="1"/>
        <end position="35"/>
    </location>
</feature>
<feature type="region of interest" description="Disordered" evidence="4">
    <location>
        <begin position="236"/>
        <end position="267"/>
    </location>
</feature>
<feature type="region of interest" description="Disordered" evidence="4">
    <location>
        <begin position="332"/>
        <end position="382"/>
    </location>
</feature>
<feature type="region of interest" description="Disordered" evidence="4">
    <location>
        <begin position="621"/>
        <end position="644"/>
    </location>
</feature>
<feature type="region of interest" description="Disordered" evidence="4">
    <location>
        <begin position="1155"/>
        <end position="1213"/>
    </location>
</feature>
<feature type="region of interest" description="Disordered" evidence="4">
    <location>
        <begin position="1599"/>
        <end position="1622"/>
    </location>
</feature>
<feature type="region of interest" description="Disordered" evidence="4">
    <location>
        <begin position="1643"/>
        <end position="1681"/>
    </location>
</feature>
<feature type="region of interest" description="Disordered" evidence="4">
    <location>
        <begin position="1928"/>
        <end position="1968"/>
    </location>
</feature>
<feature type="region of interest" description="Disordered" evidence="4">
    <location>
        <begin position="2015"/>
        <end position="2044"/>
    </location>
</feature>
<feature type="region of interest" description="Disordered" evidence="4">
    <location>
        <begin position="2537"/>
        <end position="2574"/>
    </location>
</feature>
<feature type="region of interest" description="Disordered" evidence="4">
    <location>
        <begin position="2702"/>
        <end position="2741"/>
    </location>
</feature>
<feature type="region of interest" description="Disordered" evidence="4">
    <location>
        <begin position="2754"/>
        <end position="2791"/>
    </location>
</feature>
<feature type="region of interest" description="Disordered" evidence="4">
    <location>
        <begin position="2902"/>
        <end position="3007"/>
    </location>
</feature>
<feature type="region of interest" description="Disordered" evidence="4">
    <location>
        <begin position="3245"/>
        <end position="3265"/>
    </location>
</feature>
<feature type="region of interest" description="Disordered" evidence="4">
    <location>
        <begin position="3348"/>
        <end position="3418"/>
    </location>
</feature>
<feature type="coiled-coil region" evidence="1">
    <location>
        <begin position="2705"/>
        <end position="2738"/>
    </location>
</feature>
<feature type="compositionally biased region" description="Low complexity" evidence="4">
    <location>
        <begin position="236"/>
        <end position="257"/>
    </location>
</feature>
<feature type="compositionally biased region" description="Basic residues" evidence="4">
    <location>
        <begin position="258"/>
        <end position="267"/>
    </location>
</feature>
<feature type="compositionally biased region" description="Low complexity" evidence="4">
    <location>
        <begin position="332"/>
        <end position="381"/>
    </location>
</feature>
<feature type="compositionally biased region" description="Low complexity" evidence="4">
    <location>
        <begin position="621"/>
        <end position="636"/>
    </location>
</feature>
<feature type="compositionally biased region" description="Low complexity" evidence="4">
    <location>
        <begin position="1155"/>
        <end position="1170"/>
    </location>
</feature>
<feature type="compositionally biased region" description="Low complexity" evidence="4">
    <location>
        <begin position="1657"/>
        <end position="1678"/>
    </location>
</feature>
<feature type="compositionally biased region" description="Low complexity" evidence="4">
    <location>
        <begin position="1935"/>
        <end position="1968"/>
    </location>
</feature>
<feature type="compositionally biased region" description="Low complexity" evidence="4">
    <location>
        <begin position="2540"/>
        <end position="2571"/>
    </location>
</feature>
<feature type="compositionally biased region" description="Basic and acidic residues" evidence="4">
    <location>
        <begin position="2706"/>
        <end position="2734"/>
    </location>
</feature>
<feature type="compositionally biased region" description="Low complexity" evidence="4">
    <location>
        <begin position="2758"/>
        <end position="2791"/>
    </location>
</feature>
<feature type="compositionally biased region" description="Low complexity" evidence="4">
    <location>
        <begin position="2902"/>
        <end position="2947"/>
    </location>
</feature>
<feature type="compositionally biased region" description="Polar residues" evidence="4">
    <location>
        <begin position="2948"/>
        <end position="2962"/>
    </location>
</feature>
<feature type="compositionally biased region" description="Low complexity" evidence="4">
    <location>
        <begin position="2963"/>
        <end position="2980"/>
    </location>
</feature>
<feature type="compositionally biased region" description="Low complexity" evidence="4">
    <location>
        <begin position="2988"/>
        <end position="3006"/>
    </location>
</feature>
<feature type="compositionally biased region" description="Low complexity" evidence="4">
    <location>
        <begin position="3357"/>
        <end position="3411"/>
    </location>
</feature>
<feature type="sequence conflict" description="In Ref. 3; AAN38985." evidence="9" ref="3">
    <original>N</original>
    <variation>T</variation>
    <location>
        <position position="2030"/>
    </location>
</feature>
<feature type="sequence conflict" description="In Ref. 3; AAN38985." evidence="9" ref="3">
    <original>L</original>
    <variation>W</variation>
    <location>
        <position position="4104"/>
    </location>
</feature>
<keyword id="KW-0175">Coiled coil</keyword>
<keyword id="KW-0967">Endosome</keyword>
<keyword id="KW-0458">Lysosome</keyword>
<keyword id="KW-0472">Membrane</keyword>
<keyword id="KW-1185">Reference proteome</keyword>
<keyword id="KW-0677">Repeat</keyword>
<keyword id="KW-0812">Transmembrane</keyword>
<keyword id="KW-1133">Transmembrane helix</keyword>
<keyword id="KW-0853">WD repeat</keyword>
<dbReference type="EMBL" id="AAFI02000006">
    <property type="protein sequence ID" value="EAL71616.2"/>
    <property type="molecule type" value="Genomic_DNA"/>
</dbReference>
<dbReference type="EMBL" id="AY159038">
    <property type="protein sequence ID" value="AAN38985.1"/>
    <property type="status" value="ALT_SEQ"/>
    <property type="molecule type" value="Genomic_DNA"/>
</dbReference>
<dbReference type="RefSeq" id="XP_645615.2">
    <property type="nucleotide sequence ID" value="XM_640523.2"/>
</dbReference>
<dbReference type="SMR" id="Q86JF2"/>
<dbReference type="FunCoup" id="Q86JF2">
    <property type="interactions" value="1"/>
</dbReference>
<dbReference type="STRING" id="44689.Q86JF2"/>
<dbReference type="GlyGen" id="Q86JF2">
    <property type="glycosylation" value="2 sites"/>
</dbReference>
<dbReference type="PaxDb" id="44689-DDB0185107"/>
<dbReference type="EnsemblProtists" id="EAL71616">
    <property type="protein sequence ID" value="EAL71616"/>
    <property type="gene ID" value="DDB_G0271504"/>
</dbReference>
<dbReference type="GeneID" id="8618070"/>
<dbReference type="KEGG" id="ddi:DDB_G0271504"/>
<dbReference type="dictyBase" id="DDB_G0271504">
    <property type="gene designation" value="lvsB"/>
</dbReference>
<dbReference type="VEuPathDB" id="AmoebaDB:DDB_G0271504"/>
<dbReference type="eggNOG" id="KOG1786">
    <property type="taxonomic scope" value="Eukaryota"/>
</dbReference>
<dbReference type="HOGENOM" id="CLU_223969_0_0_1"/>
<dbReference type="InParanoid" id="Q86JF2"/>
<dbReference type="OMA" id="SWPPSCE"/>
<dbReference type="PRO" id="PR:Q86JF2"/>
<dbReference type="Proteomes" id="UP000002195">
    <property type="component" value="Chromosome 2"/>
</dbReference>
<dbReference type="GO" id="GO:0005768">
    <property type="term" value="C:endosome"/>
    <property type="evidence" value="ECO:0007669"/>
    <property type="project" value="UniProtKB-SubCell"/>
</dbReference>
<dbReference type="GO" id="GO:0005764">
    <property type="term" value="C:lysosome"/>
    <property type="evidence" value="ECO:0000314"/>
    <property type="project" value="dictyBase"/>
</dbReference>
<dbReference type="GO" id="GO:0016020">
    <property type="term" value="C:membrane"/>
    <property type="evidence" value="ECO:0007669"/>
    <property type="project" value="UniProtKB-SubCell"/>
</dbReference>
<dbReference type="GO" id="GO:0045335">
    <property type="term" value="C:phagocytic vesicle"/>
    <property type="evidence" value="ECO:0000314"/>
    <property type="project" value="dictyBase"/>
</dbReference>
<dbReference type="GO" id="GO:0032010">
    <property type="term" value="C:phagolysosome"/>
    <property type="evidence" value="ECO:0000314"/>
    <property type="project" value="dictyBase"/>
</dbReference>
<dbReference type="GO" id="GO:0009267">
    <property type="term" value="P:cellular response to starvation"/>
    <property type="evidence" value="ECO:0000315"/>
    <property type="project" value="dictyBase"/>
</dbReference>
<dbReference type="GO" id="GO:0031154">
    <property type="term" value="P:culmination involved in sorocarp development"/>
    <property type="evidence" value="ECO:0007001"/>
    <property type="project" value="dictyBase"/>
</dbReference>
<dbReference type="GO" id="GO:0006887">
    <property type="term" value="P:exocytosis"/>
    <property type="evidence" value="ECO:0000315"/>
    <property type="project" value="dictyBase"/>
</dbReference>
<dbReference type="GO" id="GO:0007042">
    <property type="term" value="P:lysosomal lumen acidification"/>
    <property type="evidence" value="ECO:0000314"/>
    <property type="project" value="dictyBase"/>
</dbReference>
<dbReference type="GO" id="GO:0007041">
    <property type="term" value="P:lysosomal transport"/>
    <property type="evidence" value="ECO:0000315"/>
    <property type="project" value="dictyBase"/>
</dbReference>
<dbReference type="GO" id="GO:0007040">
    <property type="term" value="P:lysosome organization"/>
    <property type="evidence" value="ECO:0000315"/>
    <property type="project" value="dictyBase"/>
</dbReference>
<dbReference type="GO" id="GO:1905362">
    <property type="term" value="P:negative regulation of endosomal vesicle fusion"/>
    <property type="evidence" value="ECO:0000315"/>
    <property type="project" value="dictyBase"/>
</dbReference>
<dbReference type="GO" id="GO:0001845">
    <property type="term" value="P:phagolysosome assembly"/>
    <property type="evidence" value="ECO:0000315"/>
    <property type="project" value="dictyBase"/>
</dbReference>
<dbReference type="GO" id="GO:0071692">
    <property type="term" value="P:protein localization to extracellular region"/>
    <property type="evidence" value="ECO:0000315"/>
    <property type="project" value="dictyBase"/>
</dbReference>
<dbReference type="GO" id="GO:0009306">
    <property type="term" value="P:protein secretion"/>
    <property type="evidence" value="ECO:0000314"/>
    <property type="project" value="dictyBase"/>
</dbReference>
<dbReference type="GO" id="GO:0097494">
    <property type="term" value="P:regulation of vesicle size"/>
    <property type="evidence" value="ECO:0000315"/>
    <property type="project" value="dictyBase"/>
</dbReference>
<dbReference type="GO" id="GO:0006970">
    <property type="term" value="P:response to osmotic stress"/>
    <property type="evidence" value="ECO:0000315"/>
    <property type="project" value="dictyBase"/>
</dbReference>
<dbReference type="CDD" id="cd06071">
    <property type="entry name" value="Beach"/>
    <property type="match status" value="1"/>
</dbReference>
<dbReference type="FunFam" id="2.130.10.10:FF:000292">
    <property type="entry name" value="Lysosomal trafficking regulator"/>
    <property type="match status" value="1"/>
</dbReference>
<dbReference type="FunFam" id="1.10.1540.10:FF:000002">
    <property type="entry name" value="WD repeat and FYVE domain containing 3"/>
    <property type="match status" value="1"/>
</dbReference>
<dbReference type="Gene3D" id="1.10.1540.10">
    <property type="entry name" value="BEACH domain"/>
    <property type="match status" value="1"/>
</dbReference>
<dbReference type="Gene3D" id="1.25.10.10">
    <property type="entry name" value="Leucine-rich Repeat Variant"/>
    <property type="match status" value="1"/>
</dbReference>
<dbReference type="Gene3D" id="2.30.29.30">
    <property type="entry name" value="Pleckstrin-homology domain (PH domain)/Phosphotyrosine-binding domain (PTB)"/>
    <property type="match status" value="1"/>
</dbReference>
<dbReference type="Gene3D" id="2.130.10.10">
    <property type="entry name" value="YVTN repeat-like/Quinoprotein amine dehydrogenase"/>
    <property type="match status" value="2"/>
</dbReference>
<dbReference type="InterPro" id="IPR011989">
    <property type="entry name" value="ARM-like"/>
</dbReference>
<dbReference type="InterPro" id="IPR016024">
    <property type="entry name" value="ARM-type_fold"/>
</dbReference>
<dbReference type="InterPro" id="IPR000409">
    <property type="entry name" value="BEACH_dom"/>
</dbReference>
<dbReference type="InterPro" id="IPR036372">
    <property type="entry name" value="BEACH_dom_sf"/>
</dbReference>
<dbReference type="InterPro" id="IPR050865">
    <property type="entry name" value="BEACH_Domain"/>
</dbReference>
<dbReference type="InterPro" id="IPR046851">
    <property type="entry name" value="NBCH_WD40"/>
</dbReference>
<dbReference type="InterPro" id="IPR023362">
    <property type="entry name" value="PH-BEACH_dom"/>
</dbReference>
<dbReference type="InterPro" id="IPR011993">
    <property type="entry name" value="PH-like_dom_sf"/>
</dbReference>
<dbReference type="InterPro" id="IPR015943">
    <property type="entry name" value="WD40/YVTN_repeat-like_dom_sf"/>
</dbReference>
<dbReference type="InterPro" id="IPR019775">
    <property type="entry name" value="WD40_repeat_CS"/>
</dbReference>
<dbReference type="InterPro" id="IPR036322">
    <property type="entry name" value="WD40_repeat_dom_sf"/>
</dbReference>
<dbReference type="InterPro" id="IPR001680">
    <property type="entry name" value="WD40_rpt"/>
</dbReference>
<dbReference type="PANTHER" id="PTHR13743">
    <property type="entry name" value="BEIGE/BEACH-RELATED"/>
    <property type="match status" value="1"/>
</dbReference>
<dbReference type="PANTHER" id="PTHR13743:SF86">
    <property type="entry name" value="LYSOSOMAL-TRAFFICKING REGULATOR"/>
    <property type="match status" value="1"/>
</dbReference>
<dbReference type="Pfam" id="PF02138">
    <property type="entry name" value="Beach"/>
    <property type="match status" value="1"/>
</dbReference>
<dbReference type="Pfam" id="PF20426">
    <property type="entry name" value="NBCH_WD40"/>
    <property type="match status" value="1"/>
</dbReference>
<dbReference type="Pfam" id="PF14844">
    <property type="entry name" value="PH_BEACH"/>
    <property type="match status" value="1"/>
</dbReference>
<dbReference type="SMART" id="SM01026">
    <property type="entry name" value="Beach"/>
    <property type="match status" value="1"/>
</dbReference>
<dbReference type="SMART" id="SM00320">
    <property type="entry name" value="WD40"/>
    <property type="match status" value="5"/>
</dbReference>
<dbReference type="SUPFAM" id="SSF48371">
    <property type="entry name" value="ARM repeat"/>
    <property type="match status" value="1"/>
</dbReference>
<dbReference type="SUPFAM" id="SSF81837">
    <property type="entry name" value="BEACH domain"/>
    <property type="match status" value="1"/>
</dbReference>
<dbReference type="SUPFAM" id="SSF50729">
    <property type="entry name" value="PH domain-like"/>
    <property type="match status" value="1"/>
</dbReference>
<dbReference type="SUPFAM" id="SSF50978">
    <property type="entry name" value="WD40 repeat-like"/>
    <property type="match status" value="1"/>
</dbReference>
<dbReference type="PROSITE" id="PS50197">
    <property type="entry name" value="BEACH"/>
    <property type="match status" value="1"/>
</dbReference>
<dbReference type="PROSITE" id="PS51783">
    <property type="entry name" value="PH_BEACH"/>
    <property type="match status" value="1"/>
</dbReference>
<dbReference type="PROSITE" id="PS00678">
    <property type="entry name" value="WD_REPEATS_1"/>
    <property type="match status" value="1"/>
</dbReference>
<dbReference type="PROSITE" id="PS50082">
    <property type="entry name" value="WD_REPEATS_2"/>
    <property type="match status" value="1"/>
</dbReference>
<dbReference type="PROSITE" id="PS50294">
    <property type="entry name" value="WD_REPEATS_REGION"/>
    <property type="match status" value="1"/>
</dbReference>
<reference key="1">
    <citation type="journal article" date="2002" name="Nature">
        <title>Sequence and analysis of chromosome 2 of Dictyostelium discoideum.</title>
        <authorList>
            <person name="Gloeckner G."/>
            <person name="Eichinger L."/>
            <person name="Szafranski K."/>
            <person name="Pachebat J.A."/>
            <person name="Bankier A.T."/>
            <person name="Dear P.H."/>
            <person name="Lehmann R."/>
            <person name="Baumgart C."/>
            <person name="Parra G."/>
            <person name="Abril J.F."/>
            <person name="Guigo R."/>
            <person name="Kumpf K."/>
            <person name="Tunggal B."/>
            <person name="Cox E.C."/>
            <person name="Quail M.A."/>
            <person name="Platzer M."/>
            <person name="Rosenthal A."/>
            <person name="Noegel A.A."/>
        </authorList>
    </citation>
    <scope>NUCLEOTIDE SEQUENCE [LARGE SCALE GENOMIC DNA]</scope>
    <source>
        <strain>AX4</strain>
    </source>
</reference>
<reference key="2">
    <citation type="journal article" date="2005" name="Nature">
        <title>The genome of the social amoeba Dictyostelium discoideum.</title>
        <authorList>
            <person name="Eichinger L."/>
            <person name="Pachebat J.A."/>
            <person name="Gloeckner G."/>
            <person name="Rajandream M.A."/>
            <person name="Sucgang R."/>
            <person name="Berriman M."/>
            <person name="Song J."/>
            <person name="Olsen R."/>
            <person name="Szafranski K."/>
            <person name="Xu Q."/>
            <person name="Tunggal B."/>
            <person name="Kummerfeld S."/>
            <person name="Madera M."/>
            <person name="Konfortov B.A."/>
            <person name="Rivero F."/>
            <person name="Bankier A.T."/>
            <person name="Lehmann R."/>
            <person name="Hamlin N."/>
            <person name="Davies R."/>
            <person name="Gaudet P."/>
            <person name="Fey P."/>
            <person name="Pilcher K."/>
            <person name="Chen G."/>
            <person name="Saunders D."/>
            <person name="Sodergren E.J."/>
            <person name="Davis P."/>
            <person name="Kerhornou A."/>
            <person name="Nie X."/>
            <person name="Hall N."/>
            <person name="Anjard C."/>
            <person name="Hemphill L."/>
            <person name="Bason N."/>
            <person name="Farbrother P."/>
            <person name="Desany B."/>
            <person name="Just E."/>
            <person name="Morio T."/>
            <person name="Rost R."/>
            <person name="Churcher C.M."/>
            <person name="Cooper J."/>
            <person name="Haydock S."/>
            <person name="van Driessche N."/>
            <person name="Cronin A."/>
            <person name="Goodhead I."/>
            <person name="Muzny D.M."/>
            <person name="Mourier T."/>
            <person name="Pain A."/>
            <person name="Lu M."/>
            <person name="Harper D."/>
            <person name="Lindsay R."/>
            <person name="Hauser H."/>
            <person name="James K.D."/>
            <person name="Quiles M."/>
            <person name="Madan Babu M."/>
            <person name="Saito T."/>
            <person name="Buchrieser C."/>
            <person name="Wardroper A."/>
            <person name="Felder M."/>
            <person name="Thangavelu M."/>
            <person name="Johnson D."/>
            <person name="Knights A."/>
            <person name="Loulseged H."/>
            <person name="Mungall K.L."/>
            <person name="Oliver K."/>
            <person name="Price C."/>
            <person name="Quail M.A."/>
            <person name="Urushihara H."/>
            <person name="Hernandez J."/>
            <person name="Rabbinowitsch E."/>
            <person name="Steffen D."/>
            <person name="Sanders M."/>
            <person name="Ma J."/>
            <person name="Kohara Y."/>
            <person name="Sharp S."/>
            <person name="Simmonds M.N."/>
            <person name="Spiegler S."/>
            <person name="Tivey A."/>
            <person name="Sugano S."/>
            <person name="White B."/>
            <person name="Walker D."/>
            <person name="Woodward J.R."/>
            <person name="Winckler T."/>
            <person name="Tanaka Y."/>
            <person name="Shaulsky G."/>
            <person name="Schleicher M."/>
            <person name="Weinstock G.M."/>
            <person name="Rosenthal A."/>
            <person name="Cox E.C."/>
            <person name="Chisholm R.L."/>
            <person name="Gibbs R.A."/>
            <person name="Loomis W.F."/>
            <person name="Platzer M."/>
            <person name="Kay R.R."/>
            <person name="Williams J.G."/>
            <person name="Dear P.H."/>
            <person name="Noegel A.A."/>
            <person name="Barrell B.G."/>
            <person name="Kuspa A."/>
        </authorList>
    </citation>
    <scope>NUCLEOTIDE SEQUENCE [LARGE SCALE GENOMIC DNA]</scope>
    <source>
        <strain>AX4</strain>
    </source>
</reference>
<reference key="3">
    <citation type="journal article" date="2002" name="J. Cell. Biochem.">
        <title>BEACH family of proteins: phylogenetic and functional analysis of six Dictyostelium BEACH proteins.</title>
        <authorList>
            <person name="Wang N."/>
            <person name="Wu W.I."/>
            <person name="De Lozanne A."/>
        </authorList>
    </citation>
    <scope>NUCLEOTIDE SEQUENCE [GENOMIC DNA] OF 416-4118</scope>
    <scope>FUNCTION</scope>
    <source>
        <strain>NC4A2</strain>
    </source>
</reference>
<reference key="4">
    <citation type="journal article" date="2002" name="Mol. Biol. Cell">
        <title>Dictyostelium LvsB mutants model the lysosomal defects associated with Chediak-Higashi syndrome.</title>
        <authorList>
            <person name="Harris E."/>
            <person name="Wang N."/>
            <person name="Wu Wl W.L."/>
            <person name="Weatherford A."/>
            <person name="De Lozanne A."/>
            <person name="Cardelli J."/>
        </authorList>
    </citation>
    <scope>FUNCTION</scope>
</reference>
<reference key="5">
    <citation type="journal article" date="2007" name="Traffic">
        <title>The BEACH protein LvsB is localized on lysosomes and postlysosomes and limits their fusion with early endosomes.</title>
        <authorList>
            <person name="Kypri E."/>
            <person name="Schmauch C."/>
            <person name="Maniak M."/>
            <person name="De Lozanne A."/>
        </authorList>
    </citation>
    <scope>FUNCTION</scope>
    <scope>SUBCELLULAR LOCATION</scope>
</reference>
<reference key="6">
    <citation type="journal article" date="2007" name="J. Cell Sci.">
        <title>A LYST/beige homolog is involved in biogenesis of Dictyostelium secretory lysosomes.</title>
        <authorList>
            <person name="Charette S.J."/>
            <person name="Cosson P."/>
        </authorList>
    </citation>
    <scope>FUNCTION</scope>
</reference>